<organism>
    <name type="scientific">Neisseria meningitidis serogroup C / serotype 2a (strain ATCC 700532 / DSM 15464 / FAM18)</name>
    <dbReference type="NCBI Taxonomy" id="272831"/>
    <lineage>
        <taxon>Bacteria</taxon>
        <taxon>Pseudomonadati</taxon>
        <taxon>Pseudomonadota</taxon>
        <taxon>Betaproteobacteria</taxon>
        <taxon>Neisseriales</taxon>
        <taxon>Neisseriaceae</taxon>
        <taxon>Neisseria</taxon>
    </lineage>
</organism>
<dbReference type="EMBL" id="AM421808">
    <property type="protein sequence ID" value="CAM11070.1"/>
    <property type="molecule type" value="Genomic_DNA"/>
</dbReference>
<dbReference type="RefSeq" id="WP_002214793.1">
    <property type="nucleotide sequence ID" value="NC_008767.1"/>
</dbReference>
<dbReference type="SMR" id="A1KW14"/>
<dbReference type="KEGG" id="nmc:NMC1909"/>
<dbReference type="HOGENOM" id="CLU_085114_3_0_4"/>
<dbReference type="Proteomes" id="UP000002286">
    <property type="component" value="Chromosome"/>
</dbReference>
<dbReference type="GO" id="GO:0005886">
    <property type="term" value="C:plasma membrane"/>
    <property type="evidence" value="ECO:0007669"/>
    <property type="project" value="UniProtKB-SubCell"/>
</dbReference>
<dbReference type="GO" id="GO:0045259">
    <property type="term" value="C:proton-transporting ATP synthase complex"/>
    <property type="evidence" value="ECO:0007669"/>
    <property type="project" value="UniProtKB-KW"/>
</dbReference>
<dbReference type="GO" id="GO:0046933">
    <property type="term" value="F:proton-transporting ATP synthase activity, rotational mechanism"/>
    <property type="evidence" value="ECO:0007669"/>
    <property type="project" value="UniProtKB-UniRule"/>
</dbReference>
<dbReference type="Gene3D" id="1.10.520.20">
    <property type="entry name" value="N-terminal domain of the delta subunit of the F1F0-ATP synthase"/>
    <property type="match status" value="1"/>
</dbReference>
<dbReference type="HAMAP" id="MF_01416">
    <property type="entry name" value="ATP_synth_delta_bact"/>
    <property type="match status" value="1"/>
</dbReference>
<dbReference type="InterPro" id="IPR026015">
    <property type="entry name" value="ATP_synth_OSCP/delta_N_sf"/>
</dbReference>
<dbReference type="InterPro" id="IPR020781">
    <property type="entry name" value="ATPase_OSCP/d_CS"/>
</dbReference>
<dbReference type="InterPro" id="IPR000711">
    <property type="entry name" value="ATPase_OSCP/dsu"/>
</dbReference>
<dbReference type="NCBIfam" id="TIGR01145">
    <property type="entry name" value="ATP_synt_delta"/>
    <property type="match status" value="1"/>
</dbReference>
<dbReference type="NCBIfam" id="NF004402">
    <property type="entry name" value="PRK05758.2-2"/>
    <property type="match status" value="1"/>
</dbReference>
<dbReference type="PANTHER" id="PTHR11910">
    <property type="entry name" value="ATP SYNTHASE DELTA CHAIN"/>
    <property type="match status" value="1"/>
</dbReference>
<dbReference type="Pfam" id="PF00213">
    <property type="entry name" value="OSCP"/>
    <property type="match status" value="1"/>
</dbReference>
<dbReference type="PRINTS" id="PR00125">
    <property type="entry name" value="ATPASEDELTA"/>
</dbReference>
<dbReference type="SUPFAM" id="SSF47928">
    <property type="entry name" value="N-terminal domain of the delta subunit of the F1F0-ATP synthase"/>
    <property type="match status" value="1"/>
</dbReference>
<dbReference type="PROSITE" id="PS00389">
    <property type="entry name" value="ATPASE_DELTA"/>
    <property type="match status" value="1"/>
</dbReference>
<name>ATPD_NEIMF</name>
<evidence type="ECO:0000255" key="1">
    <source>
        <dbReference type="HAMAP-Rule" id="MF_01416"/>
    </source>
</evidence>
<gene>
    <name evidence="1" type="primary">atpH</name>
    <name type="ordered locus">NMC1909</name>
</gene>
<feature type="chain" id="PRO_0000371036" description="ATP synthase subunit delta">
    <location>
        <begin position="1"/>
        <end position="177"/>
    </location>
</feature>
<protein>
    <recommendedName>
        <fullName evidence="1">ATP synthase subunit delta</fullName>
    </recommendedName>
    <alternativeName>
        <fullName evidence="1">ATP synthase F(1) sector subunit delta</fullName>
    </alternativeName>
    <alternativeName>
        <fullName evidence="1">F-type ATPase subunit delta</fullName>
        <shortName evidence="1">F-ATPase subunit delta</shortName>
    </alternativeName>
</protein>
<reference key="1">
    <citation type="journal article" date="2007" name="PLoS Genet.">
        <title>Meningococcal genetic variation mechanisms viewed through comparative analysis of serogroup C strain FAM18.</title>
        <authorList>
            <person name="Bentley S.D."/>
            <person name="Vernikos G.S."/>
            <person name="Snyder L.A.S."/>
            <person name="Churcher C."/>
            <person name="Arrowsmith C."/>
            <person name="Chillingworth T."/>
            <person name="Cronin A."/>
            <person name="Davis P.H."/>
            <person name="Holroyd N.E."/>
            <person name="Jagels K."/>
            <person name="Maddison M."/>
            <person name="Moule S."/>
            <person name="Rabbinowitsch E."/>
            <person name="Sharp S."/>
            <person name="Unwin L."/>
            <person name="Whitehead S."/>
            <person name="Quail M.A."/>
            <person name="Achtman M."/>
            <person name="Barrell B.G."/>
            <person name="Saunders N.J."/>
            <person name="Parkhill J."/>
        </authorList>
    </citation>
    <scope>NUCLEOTIDE SEQUENCE [LARGE SCALE GENOMIC DNA]</scope>
    <source>
        <strain>ATCC 700532 / DSM 15464 / FAM18</strain>
    </source>
</reference>
<accession>A1KW14</accession>
<sequence length="177" mass="19498">MAEFATIARPYAKALFGLAQEKNQIESWLGGLEKLAAVVQEGKVASLIDRPETNASEKADILIDLVGLKDKELKNFVIVLAGQKRLSILPEVYAQYQDLTLSFNHIKSAVIYSAYPLTDKQVGELAQMLNKRFDSELKISVEIEPELIGGIKVEVGDQVLDLSVQGKLSALYTTMTN</sequence>
<keyword id="KW-0066">ATP synthesis</keyword>
<keyword id="KW-0997">Cell inner membrane</keyword>
<keyword id="KW-1003">Cell membrane</keyword>
<keyword id="KW-0139">CF(1)</keyword>
<keyword id="KW-0375">Hydrogen ion transport</keyword>
<keyword id="KW-0406">Ion transport</keyword>
<keyword id="KW-0472">Membrane</keyword>
<keyword id="KW-0813">Transport</keyword>
<proteinExistence type="inferred from homology"/>
<comment type="function">
    <text evidence="1">F(1)F(0) ATP synthase produces ATP from ADP in the presence of a proton or sodium gradient. F-type ATPases consist of two structural domains, F(1) containing the extramembraneous catalytic core and F(0) containing the membrane proton channel, linked together by a central stalk and a peripheral stalk. During catalysis, ATP synthesis in the catalytic domain of F(1) is coupled via a rotary mechanism of the central stalk subunits to proton translocation.</text>
</comment>
<comment type="function">
    <text evidence="1">This protein is part of the stalk that links CF(0) to CF(1). It either transmits conformational changes from CF(0) to CF(1) or is implicated in proton conduction.</text>
</comment>
<comment type="subunit">
    <text evidence="1">F-type ATPases have 2 components, F(1) - the catalytic core - and F(0) - the membrane proton channel. F(1) has five subunits: alpha(3), beta(3), gamma(1), delta(1), epsilon(1). F(0) has three main subunits: a(1), b(2) and c(10-14). The alpha and beta chains form an alternating ring which encloses part of the gamma chain. F(1) is attached to F(0) by a central stalk formed by the gamma and epsilon chains, while a peripheral stalk is formed by the delta and b chains.</text>
</comment>
<comment type="subcellular location">
    <subcellularLocation>
        <location evidence="1">Cell inner membrane</location>
        <topology evidence="1">Peripheral membrane protein</topology>
    </subcellularLocation>
</comment>
<comment type="similarity">
    <text evidence="1">Belongs to the ATPase delta chain family.</text>
</comment>